<proteinExistence type="inferred from homology"/>
<comment type="function">
    <text evidence="1">Sulfur carrier protein involved in sulfur trafficking in the cell. Part of a sulfur-relay system required for 2-thiolation during synthesis of 2-thiouridine of the modified wobble base 5-methylaminomethyl-2-thiouridine (mnm(5)s(2)U) in tRNA. Interacts with IscS and stimulates its cysteine desulfurase activity. Accepts an activated sulfur from IscS, which is then transferred to TusD, and thus determines the direction of sulfur flow from IscS to 2-thiouridine formation. Also appears to be involved in sulfur transfer for the biosynthesis of molybdopterin.</text>
</comment>
<comment type="pathway">
    <text evidence="1">tRNA modification.</text>
</comment>
<comment type="subunit">
    <text evidence="1">Interacts with IscS.</text>
</comment>
<comment type="subcellular location">
    <subcellularLocation>
        <location evidence="1">Cytoplasm</location>
    </subcellularLocation>
</comment>
<comment type="similarity">
    <text evidence="1">Belongs to the sulfur carrier protein TusA family.</text>
</comment>
<accession>A8AR31</accession>
<name>TUSA_CITK8</name>
<feature type="chain" id="PRO_1000050010" description="Sulfur carrier protein TusA">
    <location>
        <begin position="1"/>
        <end position="81"/>
    </location>
</feature>
<feature type="active site" description="Cysteine persulfide intermediate" evidence="1">
    <location>
        <position position="19"/>
    </location>
</feature>
<protein>
    <recommendedName>
        <fullName evidence="1">Sulfur carrier protein TusA</fullName>
    </recommendedName>
    <alternativeName>
        <fullName evidence="1">Sulfur mediator TusA</fullName>
    </alternativeName>
    <alternativeName>
        <fullName evidence="1">Sulfur transfer protein TusA</fullName>
    </alternativeName>
    <alternativeName>
        <fullName evidence="1">tRNA 2-thiouridine synthesizing protein A</fullName>
    </alternativeName>
</protein>
<dbReference type="EMBL" id="CP000822">
    <property type="protein sequence ID" value="ABV15944.1"/>
    <property type="molecule type" value="Genomic_DNA"/>
</dbReference>
<dbReference type="RefSeq" id="WP_012135585.1">
    <property type="nucleotide sequence ID" value="NC_009792.1"/>
</dbReference>
<dbReference type="SMR" id="A8AR31"/>
<dbReference type="STRING" id="290338.CKO_04900"/>
<dbReference type="GeneID" id="45138386"/>
<dbReference type="KEGG" id="cko:CKO_04900"/>
<dbReference type="HOGENOM" id="CLU_165255_5_0_6"/>
<dbReference type="OrthoDB" id="9797352at2"/>
<dbReference type="Proteomes" id="UP000008148">
    <property type="component" value="Chromosome"/>
</dbReference>
<dbReference type="GO" id="GO:0005737">
    <property type="term" value="C:cytoplasm"/>
    <property type="evidence" value="ECO:0007669"/>
    <property type="project" value="UniProtKB-SubCell"/>
</dbReference>
<dbReference type="GO" id="GO:0097163">
    <property type="term" value="F:sulfur carrier activity"/>
    <property type="evidence" value="ECO:0007669"/>
    <property type="project" value="UniProtKB-UniRule"/>
</dbReference>
<dbReference type="GO" id="GO:0002143">
    <property type="term" value="P:tRNA wobble position uridine thiolation"/>
    <property type="evidence" value="ECO:0007669"/>
    <property type="project" value="InterPro"/>
</dbReference>
<dbReference type="CDD" id="cd03423">
    <property type="entry name" value="SirA"/>
    <property type="match status" value="1"/>
</dbReference>
<dbReference type="FunFam" id="3.30.110.40:FF:000002">
    <property type="entry name" value="Sulfur carrier protein TusA"/>
    <property type="match status" value="1"/>
</dbReference>
<dbReference type="Gene3D" id="3.30.110.40">
    <property type="entry name" value="TusA-like domain"/>
    <property type="match status" value="1"/>
</dbReference>
<dbReference type="HAMAP" id="MF_00413">
    <property type="entry name" value="Thiourid_synth_A"/>
    <property type="match status" value="1"/>
</dbReference>
<dbReference type="InterPro" id="IPR022931">
    <property type="entry name" value="Sulphur_carrier_TusA"/>
</dbReference>
<dbReference type="InterPro" id="IPR001455">
    <property type="entry name" value="TusA-like"/>
</dbReference>
<dbReference type="InterPro" id="IPR036868">
    <property type="entry name" value="TusA-like_sf"/>
</dbReference>
<dbReference type="NCBIfam" id="NF001423">
    <property type="entry name" value="PRK00299.1"/>
    <property type="match status" value="1"/>
</dbReference>
<dbReference type="PANTHER" id="PTHR33279:SF2">
    <property type="entry name" value="SULFUR CARRIER PROTEIN TUSA"/>
    <property type="match status" value="1"/>
</dbReference>
<dbReference type="PANTHER" id="PTHR33279">
    <property type="entry name" value="SULFUR CARRIER PROTEIN YEDF-RELATED"/>
    <property type="match status" value="1"/>
</dbReference>
<dbReference type="Pfam" id="PF01206">
    <property type="entry name" value="TusA"/>
    <property type="match status" value="1"/>
</dbReference>
<dbReference type="SUPFAM" id="SSF64307">
    <property type="entry name" value="SirA-like"/>
    <property type="match status" value="1"/>
</dbReference>
<dbReference type="PROSITE" id="PS01148">
    <property type="entry name" value="UPF0033"/>
    <property type="match status" value="1"/>
</dbReference>
<gene>
    <name evidence="1" type="primary">tusA</name>
    <name type="ordered locus">CKO_04900</name>
</gene>
<reference key="1">
    <citation type="submission" date="2007-08" db="EMBL/GenBank/DDBJ databases">
        <authorList>
            <consortium name="The Citrobacter koseri Genome Sequencing Project"/>
            <person name="McClelland M."/>
            <person name="Sanderson E.K."/>
            <person name="Porwollik S."/>
            <person name="Spieth J."/>
            <person name="Clifton W.S."/>
            <person name="Latreille P."/>
            <person name="Courtney L."/>
            <person name="Wang C."/>
            <person name="Pepin K."/>
            <person name="Bhonagiri V."/>
            <person name="Nash W."/>
            <person name="Johnson M."/>
            <person name="Thiruvilangam P."/>
            <person name="Wilson R."/>
        </authorList>
    </citation>
    <scope>NUCLEOTIDE SEQUENCE [LARGE SCALE GENOMIC DNA]</scope>
    <source>
        <strain>ATCC BAA-895 / CDC 4225-83 / SGSC4696</strain>
    </source>
</reference>
<keyword id="KW-0963">Cytoplasm</keyword>
<keyword id="KW-1185">Reference proteome</keyword>
<keyword id="KW-0819">tRNA processing</keyword>
<evidence type="ECO:0000255" key="1">
    <source>
        <dbReference type="HAMAP-Rule" id="MF_00413"/>
    </source>
</evidence>
<sequence length="81" mass="9327">MTDLFSSPDHTLDAQGLRCPEPVMMVRKTVRNMQTGETLLIIADDPATTRDIPGFCTFMEHELMAKETDSLPYRYLLRKKH</sequence>
<organism>
    <name type="scientific">Citrobacter koseri (strain ATCC BAA-895 / CDC 4225-83 / SGSC4696)</name>
    <dbReference type="NCBI Taxonomy" id="290338"/>
    <lineage>
        <taxon>Bacteria</taxon>
        <taxon>Pseudomonadati</taxon>
        <taxon>Pseudomonadota</taxon>
        <taxon>Gammaproteobacteria</taxon>
        <taxon>Enterobacterales</taxon>
        <taxon>Enterobacteriaceae</taxon>
        <taxon>Citrobacter</taxon>
    </lineage>
</organism>